<evidence type="ECO:0000255" key="1"/>
<evidence type="ECO:0000256" key="2">
    <source>
        <dbReference type="SAM" id="MobiDB-lite"/>
    </source>
</evidence>
<evidence type="ECO:0000269" key="3">
    <source>
    </source>
</evidence>
<evidence type="ECO:0000305" key="4"/>
<keyword id="KW-0027">Amidation</keyword>
<keyword id="KW-0878">Amphibian defense peptide</keyword>
<keyword id="KW-1222">Bradykinin receptor impairing toxin</keyword>
<keyword id="KW-0903">Direct protein sequencing</keyword>
<keyword id="KW-1213">G-protein coupled receptor impairing toxin</keyword>
<keyword id="KW-0677">Repeat</keyword>
<keyword id="KW-0964">Secreted</keyword>
<keyword id="KW-0732">Signal</keyword>
<keyword id="KW-0800">Toxin</keyword>
<keyword id="KW-0838">Vasoactive</keyword>
<keyword id="KW-0840">Vasodilator</keyword>
<dbReference type="EMBL" id="AJ440236">
    <property type="protein sequence ID" value="CAD29346.1"/>
    <property type="molecule type" value="mRNA"/>
</dbReference>
<dbReference type="GO" id="GO:0005576">
    <property type="term" value="C:extracellular region"/>
    <property type="evidence" value="ECO:0007669"/>
    <property type="project" value="UniProtKB-SubCell"/>
</dbReference>
<dbReference type="GO" id="GO:0005179">
    <property type="term" value="F:hormone activity"/>
    <property type="evidence" value="ECO:0007669"/>
    <property type="project" value="InterPro"/>
</dbReference>
<dbReference type="GO" id="GO:0090729">
    <property type="term" value="F:toxin activity"/>
    <property type="evidence" value="ECO:0007669"/>
    <property type="project" value="UniProtKB-KW"/>
</dbReference>
<dbReference type="GO" id="GO:0006952">
    <property type="term" value="P:defense response"/>
    <property type="evidence" value="ECO:0007669"/>
    <property type="project" value="UniProtKB-KW"/>
</dbReference>
<dbReference type="GO" id="GO:0042311">
    <property type="term" value="P:vasodilation"/>
    <property type="evidence" value="ECO:0007669"/>
    <property type="project" value="UniProtKB-KW"/>
</dbReference>
<dbReference type="InterPro" id="IPR009608">
    <property type="entry name" value="Bradykinin"/>
</dbReference>
<dbReference type="Pfam" id="PF06753">
    <property type="entry name" value="Bradykinin"/>
    <property type="match status" value="1"/>
</dbReference>
<organism>
    <name type="scientific">Bombina maxima</name>
    <name type="common">Giant fire-bellied toad</name>
    <name type="synonym">Chinese red belly toad</name>
    <dbReference type="NCBI Taxonomy" id="161274"/>
    <lineage>
        <taxon>Eukaryota</taxon>
        <taxon>Metazoa</taxon>
        <taxon>Chordata</taxon>
        <taxon>Craniata</taxon>
        <taxon>Vertebrata</taxon>
        <taxon>Euteleostomi</taxon>
        <taxon>Amphibia</taxon>
        <taxon>Batrachia</taxon>
        <taxon>Anura</taxon>
        <taxon>Bombinatoridae</taxon>
        <taxon>Bombina</taxon>
    </lineage>
</organism>
<comment type="function">
    <text>Potent vasodilator. Binds B1 (BDKRB1) and B2 (BDKRB2) bradykinin receptors.</text>
</comment>
<comment type="subcellular location">
    <subcellularLocation>
        <location>Secreted</location>
    </subcellularLocation>
</comment>
<comment type="tissue specificity">
    <text>Expressed by the skin glands.</text>
</comment>
<comment type="similarity">
    <text evidence="4">Belongs to the bradykinin-related peptide family.</text>
</comment>
<sequence>MRLWFCLSFFIVLCLEHFPGTLADERNNRDYTIRTRLHGHHKPSRNNRYAIKTSIHGHHIPRNVPESEEKTEQFLRDLPKINRKGPRPPGFSPFRGKFHSQSLRQIPGLGPLRG</sequence>
<proteinExistence type="evidence at protein level"/>
<protein>
    <recommendedName>
        <fullName>Kininogen-2</fullName>
    </recommendedName>
    <alternativeName>
        <fullName>BMK-2</fullName>
    </alternativeName>
    <component>
        <recommendedName>
            <fullName>Maximakinin</fullName>
        </recommendedName>
    </component>
    <component>
        <recommendedName>
            <fullName>Bradykinin</fullName>
        </recommendedName>
    </component>
    <component>
        <recommendedName>
            <fullName>Maximakinin-associated peptide</fullName>
        </recommendedName>
    </component>
</protein>
<reference key="1">
    <citation type="journal article" date="2003" name="Peptides">
        <title>Cloning of maximakinin precursor cDNAs from Chinese toad, Bombina maxima, venom.</title>
        <authorList>
            <person name="Chen T."/>
            <person name="Bjourson A.J."/>
            <person name="McClean S."/>
            <person name="Orr D.F."/>
            <person name="O'Kane E.J."/>
            <person name="Rao P."/>
            <person name="Shaw C."/>
        </authorList>
    </citation>
    <scope>NUCLEOTIDE SEQUENCE [MRNA]</scope>
    <scope>PROTEIN SEQUENCE OF 77-95 AND 105-114</scope>
    <scope>AMIDATION AT ARG-113</scope>
    <scope>VARIANT LEU-74</scope>
    <source>
        <tissue>Skin secretion</tissue>
    </source>
</reference>
<name>BRK2_BOMMX</name>
<accession>P83055</accession>
<feature type="signal peptide" evidence="1">
    <location>
        <begin position="1"/>
        <end position="23"/>
    </location>
</feature>
<feature type="chain" id="PRO_0000003425" description="Kininogen-2">
    <location>
        <begin position="24"/>
        <end position="114"/>
    </location>
</feature>
<feature type="peptide" id="PRO_0000003426" description="Maximakinin">
    <location>
        <begin position="77"/>
        <end position="95"/>
    </location>
</feature>
<feature type="peptide" id="PRO_0000003427" description="Bradykinin">
    <location>
        <begin position="87"/>
        <end position="95"/>
    </location>
</feature>
<feature type="peptide" id="PRO_0000003428" description="Maximakinin-associated peptide">
    <location>
        <begin position="105"/>
        <end position="113"/>
    </location>
</feature>
<feature type="region of interest" description="Disordered" evidence="2">
    <location>
        <begin position="35"/>
        <end position="114"/>
    </location>
</feature>
<feature type="compositionally biased region" description="Basic residues" evidence="2">
    <location>
        <begin position="35"/>
        <end position="45"/>
    </location>
</feature>
<feature type="compositionally biased region" description="Basic and acidic residues" evidence="2">
    <location>
        <begin position="65"/>
        <end position="80"/>
    </location>
</feature>
<feature type="modified residue" description="Arginine amide" evidence="3">
    <location>
        <position position="113"/>
    </location>
</feature>
<feature type="sequence variant" evidence="3">
    <original>F</original>
    <variation>L</variation>
    <location>
        <position position="74"/>
    </location>
</feature>